<feature type="chain" id="PRO_1000061011" description="Small ribosomal subunit protein uS9">
    <location>
        <begin position="1"/>
        <end position="136"/>
    </location>
</feature>
<feature type="region of interest" description="Disordered" evidence="2">
    <location>
        <begin position="97"/>
        <end position="136"/>
    </location>
</feature>
<feature type="compositionally biased region" description="Basic and acidic residues" evidence="2">
    <location>
        <begin position="98"/>
        <end position="116"/>
    </location>
</feature>
<feature type="compositionally biased region" description="Basic residues" evidence="2">
    <location>
        <begin position="117"/>
        <end position="136"/>
    </location>
</feature>
<proteinExistence type="inferred from homology"/>
<reference key="1">
    <citation type="journal article" date="2007" name="PLoS Genet.">
        <title>Patterns and implications of gene gain and loss in the evolution of Prochlorococcus.</title>
        <authorList>
            <person name="Kettler G.C."/>
            <person name="Martiny A.C."/>
            <person name="Huang K."/>
            <person name="Zucker J."/>
            <person name="Coleman M.L."/>
            <person name="Rodrigue S."/>
            <person name="Chen F."/>
            <person name="Lapidus A."/>
            <person name="Ferriera S."/>
            <person name="Johnson J."/>
            <person name="Steglich C."/>
            <person name="Church G.M."/>
            <person name="Richardson P."/>
            <person name="Chisholm S.W."/>
        </authorList>
    </citation>
    <scope>NUCLEOTIDE SEQUENCE [LARGE SCALE GENOMIC DNA]</scope>
    <source>
        <strain>MIT 9215</strain>
    </source>
</reference>
<keyword id="KW-0687">Ribonucleoprotein</keyword>
<keyword id="KW-0689">Ribosomal protein</keyword>
<comment type="similarity">
    <text evidence="1">Belongs to the universal ribosomal protein uS9 family.</text>
</comment>
<sequence length="136" mass="15014">MNSQIKTKAVYWGTGRRKTSVARVRLIPGNGLITINGRSGDDYLNFNPLHLNSVKAPLQTLGLENSYDILVNVFGGGLTGQADAIKQGAARALCELSPDNRKPLKTEGHLSRDPRAKERRKYGLKKARKAPQFSKR</sequence>
<protein>
    <recommendedName>
        <fullName evidence="1">Small ribosomal subunit protein uS9</fullName>
    </recommendedName>
    <alternativeName>
        <fullName evidence="3">30S ribosomal protein S9</fullName>
    </alternativeName>
</protein>
<accession>A8G735</accession>
<organism>
    <name type="scientific">Prochlorococcus marinus (strain MIT 9215)</name>
    <dbReference type="NCBI Taxonomy" id="93060"/>
    <lineage>
        <taxon>Bacteria</taxon>
        <taxon>Bacillati</taxon>
        <taxon>Cyanobacteriota</taxon>
        <taxon>Cyanophyceae</taxon>
        <taxon>Synechococcales</taxon>
        <taxon>Prochlorococcaceae</taxon>
        <taxon>Prochlorococcus</taxon>
    </lineage>
</organism>
<gene>
    <name evidence="1" type="primary">rpsI</name>
    <name evidence="1" type="synonym">rps9</name>
    <name type="ordered locus">P9215_18031</name>
</gene>
<name>RS9_PROM2</name>
<evidence type="ECO:0000255" key="1">
    <source>
        <dbReference type="HAMAP-Rule" id="MF_00532"/>
    </source>
</evidence>
<evidence type="ECO:0000256" key="2">
    <source>
        <dbReference type="SAM" id="MobiDB-lite"/>
    </source>
</evidence>
<evidence type="ECO:0000305" key="3"/>
<dbReference type="EMBL" id="CP000825">
    <property type="protein sequence ID" value="ABV51416.1"/>
    <property type="molecule type" value="Genomic_DNA"/>
</dbReference>
<dbReference type="RefSeq" id="WP_012008429.1">
    <property type="nucleotide sequence ID" value="NC_009840.1"/>
</dbReference>
<dbReference type="SMR" id="A8G735"/>
<dbReference type="STRING" id="93060.P9215_18031"/>
<dbReference type="KEGG" id="pmh:P9215_18031"/>
<dbReference type="eggNOG" id="COG0103">
    <property type="taxonomic scope" value="Bacteria"/>
</dbReference>
<dbReference type="HOGENOM" id="CLU_046483_2_1_3"/>
<dbReference type="OrthoDB" id="9803965at2"/>
<dbReference type="Proteomes" id="UP000002014">
    <property type="component" value="Chromosome"/>
</dbReference>
<dbReference type="GO" id="GO:0022627">
    <property type="term" value="C:cytosolic small ribosomal subunit"/>
    <property type="evidence" value="ECO:0007669"/>
    <property type="project" value="TreeGrafter"/>
</dbReference>
<dbReference type="GO" id="GO:0003723">
    <property type="term" value="F:RNA binding"/>
    <property type="evidence" value="ECO:0007669"/>
    <property type="project" value="TreeGrafter"/>
</dbReference>
<dbReference type="GO" id="GO:0003735">
    <property type="term" value="F:structural constituent of ribosome"/>
    <property type="evidence" value="ECO:0007669"/>
    <property type="project" value="InterPro"/>
</dbReference>
<dbReference type="GO" id="GO:0006412">
    <property type="term" value="P:translation"/>
    <property type="evidence" value="ECO:0007669"/>
    <property type="project" value="UniProtKB-UniRule"/>
</dbReference>
<dbReference type="FunFam" id="3.30.230.10:FF:000001">
    <property type="entry name" value="30S ribosomal protein S9"/>
    <property type="match status" value="1"/>
</dbReference>
<dbReference type="Gene3D" id="3.30.230.10">
    <property type="match status" value="1"/>
</dbReference>
<dbReference type="HAMAP" id="MF_00532_B">
    <property type="entry name" value="Ribosomal_uS9_B"/>
    <property type="match status" value="1"/>
</dbReference>
<dbReference type="InterPro" id="IPR020568">
    <property type="entry name" value="Ribosomal_Su5_D2-typ_SF"/>
</dbReference>
<dbReference type="InterPro" id="IPR000754">
    <property type="entry name" value="Ribosomal_uS9"/>
</dbReference>
<dbReference type="InterPro" id="IPR023035">
    <property type="entry name" value="Ribosomal_uS9_bac/plastid"/>
</dbReference>
<dbReference type="InterPro" id="IPR020574">
    <property type="entry name" value="Ribosomal_uS9_CS"/>
</dbReference>
<dbReference type="InterPro" id="IPR014721">
    <property type="entry name" value="Ribsml_uS5_D2-typ_fold_subgr"/>
</dbReference>
<dbReference type="NCBIfam" id="NF001099">
    <property type="entry name" value="PRK00132.1"/>
    <property type="match status" value="1"/>
</dbReference>
<dbReference type="PANTHER" id="PTHR21569">
    <property type="entry name" value="RIBOSOMAL PROTEIN S9"/>
    <property type="match status" value="1"/>
</dbReference>
<dbReference type="PANTHER" id="PTHR21569:SF1">
    <property type="entry name" value="SMALL RIBOSOMAL SUBUNIT PROTEIN US9M"/>
    <property type="match status" value="1"/>
</dbReference>
<dbReference type="Pfam" id="PF00380">
    <property type="entry name" value="Ribosomal_S9"/>
    <property type="match status" value="1"/>
</dbReference>
<dbReference type="SUPFAM" id="SSF54211">
    <property type="entry name" value="Ribosomal protein S5 domain 2-like"/>
    <property type="match status" value="1"/>
</dbReference>
<dbReference type="PROSITE" id="PS00360">
    <property type="entry name" value="RIBOSOMAL_S9"/>
    <property type="match status" value="1"/>
</dbReference>